<accession>P9WJA4</accession>
<accession>L0T8D1</accession>
<accession>P95259</accession>
<accession>Q7D7P9</accession>
<evidence type="ECO:0000250" key="1">
    <source>
        <dbReference type="UniProtKB" id="P9WJA5"/>
    </source>
</evidence>
<evidence type="ECO:0000305" key="2"/>
<gene>
    <name evidence="2" type="primary">higB1</name>
    <name type="ordered locus">MT2004</name>
</gene>
<reference key="1">
    <citation type="journal article" date="2002" name="J. Bacteriol.">
        <title>Whole-genome comparison of Mycobacterium tuberculosis clinical and laboratory strains.</title>
        <authorList>
            <person name="Fleischmann R.D."/>
            <person name="Alland D."/>
            <person name="Eisen J.A."/>
            <person name="Carpenter L."/>
            <person name="White O."/>
            <person name="Peterson J.D."/>
            <person name="DeBoy R.T."/>
            <person name="Dodson R.J."/>
            <person name="Gwinn M.L."/>
            <person name="Haft D.H."/>
            <person name="Hickey E.K."/>
            <person name="Kolonay J.F."/>
            <person name="Nelson W.C."/>
            <person name="Umayam L.A."/>
            <person name="Ermolaeva M.D."/>
            <person name="Salzberg S.L."/>
            <person name="Delcher A."/>
            <person name="Utterback T.R."/>
            <person name="Weidman J.F."/>
            <person name="Khouri H.M."/>
            <person name="Gill J."/>
            <person name="Mikula A."/>
            <person name="Bishai W."/>
            <person name="Jacobs W.R. Jr."/>
            <person name="Venter J.C."/>
            <person name="Fraser C.M."/>
        </authorList>
    </citation>
    <scope>NUCLEOTIDE SEQUENCE [LARGE SCALE GENOMIC DNA]</scope>
    <source>
        <strain>CDC 1551 / Oshkosh</strain>
    </source>
</reference>
<comment type="function">
    <text evidence="1">Toxic component of an atypical, type II toxin-antitoxin chaperone (TAC) system. Probably an endoribonuclease, neutralized by its cognate antitoxin HigA which also requires SecB-like chaperone MT2006 (AC Q7D7P7).</text>
</comment>
<comment type="induction">
    <text evidence="1">Operon autorepressed by HigA1.</text>
</comment>
<comment type="similarity">
    <text evidence="2">Belongs to the mycobacterial HigB family.</text>
</comment>
<comment type="sequence caution" evidence="2">
    <conflict type="erroneous initiation">
        <sequence resource="EMBL-CDS" id="AAK46276"/>
    </conflict>
    <text>Extended N-terminus.</text>
</comment>
<organism>
    <name type="scientific">Mycobacterium tuberculosis (strain CDC 1551 / Oshkosh)</name>
    <dbReference type="NCBI Taxonomy" id="83331"/>
    <lineage>
        <taxon>Bacteria</taxon>
        <taxon>Bacillati</taxon>
        <taxon>Actinomycetota</taxon>
        <taxon>Actinomycetes</taxon>
        <taxon>Mycobacteriales</taxon>
        <taxon>Mycobacteriaceae</taxon>
        <taxon>Mycobacterium</taxon>
        <taxon>Mycobacterium tuberculosis complex</taxon>
    </lineage>
</organism>
<sequence length="125" mass="14430">MPPPDPAAMGTWKFFRASVDGRPVFKKEFDKLPDQARAALIVLMQRYLVGDLAAGSIKPIRGDILELRWHEANNHFRVLFFRWGQHPVALTAFYKNQQKTPKTKIETALDRQKIWKRAFGDTPPI</sequence>
<dbReference type="EC" id="3.1.-.-"/>
<dbReference type="EMBL" id="AE000516">
    <property type="protein sequence ID" value="AAK46276.1"/>
    <property type="status" value="ALT_INIT"/>
    <property type="molecule type" value="Genomic_DNA"/>
</dbReference>
<dbReference type="PIR" id="G70638">
    <property type="entry name" value="G70638"/>
</dbReference>
<dbReference type="SMR" id="P9WJA4"/>
<dbReference type="KEGG" id="mtc:MT2004"/>
<dbReference type="HOGENOM" id="CLU_133758_0_0_11"/>
<dbReference type="Proteomes" id="UP000001020">
    <property type="component" value="Chromosome"/>
</dbReference>
<dbReference type="GO" id="GO:0004519">
    <property type="term" value="F:endonuclease activity"/>
    <property type="evidence" value="ECO:0007669"/>
    <property type="project" value="UniProtKB-KW"/>
</dbReference>
<dbReference type="InterPro" id="IPR009241">
    <property type="entry name" value="HigB-like"/>
</dbReference>
<dbReference type="Pfam" id="PF05973">
    <property type="entry name" value="Gp49"/>
    <property type="match status" value="1"/>
</dbReference>
<proteinExistence type="inferred from homology"/>
<feature type="chain" id="PRO_0000427864" description="Probable endoribonuclease HigB1">
    <location>
        <begin position="1"/>
        <end position="125"/>
    </location>
</feature>
<protein>
    <recommendedName>
        <fullName evidence="2">Probable endoribonuclease HigB1</fullName>
        <ecNumber>3.1.-.-</ecNumber>
    </recommendedName>
    <alternativeName>
        <fullName evidence="2">Toxin HigB</fullName>
    </alternativeName>
</protein>
<name>HIGB1_MYCTO</name>
<keyword id="KW-0255">Endonuclease</keyword>
<keyword id="KW-0378">Hydrolase</keyword>
<keyword id="KW-0540">Nuclease</keyword>
<keyword id="KW-1185">Reference proteome</keyword>
<keyword id="KW-1277">Toxin-antitoxin system</keyword>